<name>COAD_BACFN</name>
<protein>
    <recommendedName>
        <fullName evidence="1">Phosphopantetheine adenylyltransferase</fullName>
        <ecNumber evidence="1">2.7.7.3</ecNumber>
    </recommendedName>
    <alternativeName>
        <fullName evidence="1">Dephospho-CoA pyrophosphorylase</fullName>
    </alternativeName>
    <alternativeName>
        <fullName evidence="1">Pantetheine-phosphate adenylyltransferase</fullName>
        <shortName evidence="1">PPAT</shortName>
    </alternativeName>
</protein>
<evidence type="ECO:0000255" key="1">
    <source>
        <dbReference type="HAMAP-Rule" id="MF_00151"/>
    </source>
</evidence>
<keyword id="KW-0067">ATP-binding</keyword>
<keyword id="KW-0173">Coenzyme A biosynthesis</keyword>
<keyword id="KW-0963">Cytoplasm</keyword>
<keyword id="KW-0460">Magnesium</keyword>
<keyword id="KW-0547">Nucleotide-binding</keyword>
<keyword id="KW-0548">Nucleotidyltransferase</keyword>
<keyword id="KW-0808">Transferase</keyword>
<gene>
    <name evidence="1" type="primary">coaD</name>
    <name type="ordered locus">BF4334</name>
</gene>
<sequence>MRRAIFPGTFDPFTIGHYSVVQRTLTFMDEVVIGIGINENKNTYFPIEKRVEMIRKFYKDEPRIKVESYDCLTIDFARQVDAQFIVRGIRTVKDFEYEETIADINRKLAGIETILLFTEPELTCVSSTIVRELLGYNKDISMFIPKGMEM</sequence>
<dbReference type="EC" id="2.7.7.3" evidence="1"/>
<dbReference type="EMBL" id="CR626927">
    <property type="protein sequence ID" value="CAH10001.1"/>
    <property type="molecule type" value="Genomic_DNA"/>
</dbReference>
<dbReference type="RefSeq" id="WP_005783477.1">
    <property type="nucleotide sequence ID" value="NZ_UFTH01000001.1"/>
</dbReference>
<dbReference type="SMR" id="Q5L7F1"/>
<dbReference type="PaxDb" id="272559-BF9343_4220"/>
<dbReference type="GeneID" id="60366108"/>
<dbReference type="KEGG" id="bfs:BF9343_4220"/>
<dbReference type="eggNOG" id="COG0669">
    <property type="taxonomic scope" value="Bacteria"/>
</dbReference>
<dbReference type="HOGENOM" id="CLU_100149_1_1_10"/>
<dbReference type="UniPathway" id="UPA00241">
    <property type="reaction ID" value="UER00355"/>
</dbReference>
<dbReference type="Proteomes" id="UP000006731">
    <property type="component" value="Chromosome"/>
</dbReference>
<dbReference type="GO" id="GO:0005737">
    <property type="term" value="C:cytoplasm"/>
    <property type="evidence" value="ECO:0007669"/>
    <property type="project" value="UniProtKB-SubCell"/>
</dbReference>
<dbReference type="GO" id="GO:0005524">
    <property type="term" value="F:ATP binding"/>
    <property type="evidence" value="ECO:0007669"/>
    <property type="project" value="UniProtKB-KW"/>
</dbReference>
<dbReference type="GO" id="GO:0004595">
    <property type="term" value="F:pantetheine-phosphate adenylyltransferase activity"/>
    <property type="evidence" value="ECO:0007669"/>
    <property type="project" value="UniProtKB-UniRule"/>
</dbReference>
<dbReference type="GO" id="GO:0015937">
    <property type="term" value="P:coenzyme A biosynthetic process"/>
    <property type="evidence" value="ECO:0007669"/>
    <property type="project" value="UniProtKB-UniRule"/>
</dbReference>
<dbReference type="Gene3D" id="3.40.50.620">
    <property type="entry name" value="HUPs"/>
    <property type="match status" value="1"/>
</dbReference>
<dbReference type="HAMAP" id="MF_00151">
    <property type="entry name" value="PPAT_bact"/>
    <property type="match status" value="1"/>
</dbReference>
<dbReference type="InterPro" id="IPR004821">
    <property type="entry name" value="Cyt_trans-like"/>
</dbReference>
<dbReference type="InterPro" id="IPR001980">
    <property type="entry name" value="PPAT"/>
</dbReference>
<dbReference type="InterPro" id="IPR014729">
    <property type="entry name" value="Rossmann-like_a/b/a_fold"/>
</dbReference>
<dbReference type="NCBIfam" id="TIGR01510">
    <property type="entry name" value="coaD_prev_kdtB"/>
    <property type="match status" value="1"/>
</dbReference>
<dbReference type="NCBIfam" id="TIGR00125">
    <property type="entry name" value="cyt_tran_rel"/>
    <property type="match status" value="1"/>
</dbReference>
<dbReference type="PANTHER" id="PTHR21342">
    <property type="entry name" value="PHOSPHOPANTETHEINE ADENYLYLTRANSFERASE"/>
    <property type="match status" value="1"/>
</dbReference>
<dbReference type="PANTHER" id="PTHR21342:SF1">
    <property type="entry name" value="PHOSPHOPANTETHEINE ADENYLYLTRANSFERASE"/>
    <property type="match status" value="1"/>
</dbReference>
<dbReference type="Pfam" id="PF01467">
    <property type="entry name" value="CTP_transf_like"/>
    <property type="match status" value="1"/>
</dbReference>
<dbReference type="PRINTS" id="PR01020">
    <property type="entry name" value="LPSBIOSNTHSS"/>
</dbReference>
<dbReference type="SUPFAM" id="SSF52374">
    <property type="entry name" value="Nucleotidylyl transferase"/>
    <property type="match status" value="1"/>
</dbReference>
<feature type="chain" id="PRO_1000011093" description="Phosphopantetheine adenylyltransferase">
    <location>
        <begin position="1"/>
        <end position="150"/>
    </location>
</feature>
<feature type="binding site" evidence="1">
    <location>
        <begin position="9"/>
        <end position="10"/>
    </location>
    <ligand>
        <name>ATP</name>
        <dbReference type="ChEBI" id="CHEBI:30616"/>
    </ligand>
</feature>
<feature type="binding site" evidence="1">
    <location>
        <position position="9"/>
    </location>
    <ligand>
        <name>substrate</name>
    </ligand>
</feature>
<feature type="binding site" evidence="1">
    <location>
        <position position="17"/>
    </location>
    <ligand>
        <name>ATP</name>
        <dbReference type="ChEBI" id="CHEBI:30616"/>
    </ligand>
</feature>
<feature type="binding site" evidence="1">
    <location>
        <position position="41"/>
    </location>
    <ligand>
        <name>substrate</name>
    </ligand>
</feature>
<feature type="binding site" evidence="1">
    <location>
        <position position="73"/>
    </location>
    <ligand>
        <name>substrate</name>
    </ligand>
</feature>
<feature type="binding site" evidence="1">
    <location>
        <position position="87"/>
    </location>
    <ligand>
        <name>substrate</name>
    </ligand>
</feature>
<feature type="binding site" evidence="1">
    <location>
        <begin position="88"/>
        <end position="90"/>
    </location>
    <ligand>
        <name>ATP</name>
        <dbReference type="ChEBI" id="CHEBI:30616"/>
    </ligand>
</feature>
<feature type="binding site" evidence="1">
    <location>
        <position position="98"/>
    </location>
    <ligand>
        <name>ATP</name>
        <dbReference type="ChEBI" id="CHEBI:30616"/>
    </ligand>
</feature>
<feature type="binding site" evidence="1">
    <location>
        <begin position="122"/>
        <end position="128"/>
    </location>
    <ligand>
        <name>ATP</name>
        <dbReference type="ChEBI" id="CHEBI:30616"/>
    </ligand>
</feature>
<feature type="site" description="Transition state stabilizer" evidence="1">
    <location>
        <position position="17"/>
    </location>
</feature>
<proteinExistence type="inferred from homology"/>
<reference key="1">
    <citation type="journal article" date="2005" name="Science">
        <title>Extensive DNA inversions in the B. fragilis genome control variable gene expression.</title>
        <authorList>
            <person name="Cerdeno-Tarraga A.-M."/>
            <person name="Patrick S."/>
            <person name="Crossman L.C."/>
            <person name="Blakely G."/>
            <person name="Abratt V."/>
            <person name="Lennard N."/>
            <person name="Poxton I."/>
            <person name="Duerden B."/>
            <person name="Harris B."/>
            <person name="Quail M.A."/>
            <person name="Barron A."/>
            <person name="Clark L."/>
            <person name="Corton C."/>
            <person name="Doggett J."/>
            <person name="Holden M.T.G."/>
            <person name="Larke N."/>
            <person name="Line A."/>
            <person name="Lord A."/>
            <person name="Norbertczak H."/>
            <person name="Ormond D."/>
            <person name="Price C."/>
            <person name="Rabbinowitsch E."/>
            <person name="Woodward J."/>
            <person name="Barrell B.G."/>
            <person name="Parkhill J."/>
        </authorList>
    </citation>
    <scope>NUCLEOTIDE SEQUENCE [LARGE SCALE GENOMIC DNA]</scope>
    <source>
        <strain>ATCC 25285 / DSM 2151 / CCUG 4856 / JCM 11019 / LMG 10263 / NCTC 9343 / Onslow / VPI 2553 / EN-2</strain>
    </source>
</reference>
<comment type="function">
    <text evidence="1">Reversibly transfers an adenylyl group from ATP to 4'-phosphopantetheine, yielding dephospho-CoA (dPCoA) and pyrophosphate.</text>
</comment>
<comment type="catalytic activity">
    <reaction evidence="1">
        <text>(R)-4'-phosphopantetheine + ATP + H(+) = 3'-dephospho-CoA + diphosphate</text>
        <dbReference type="Rhea" id="RHEA:19801"/>
        <dbReference type="ChEBI" id="CHEBI:15378"/>
        <dbReference type="ChEBI" id="CHEBI:30616"/>
        <dbReference type="ChEBI" id="CHEBI:33019"/>
        <dbReference type="ChEBI" id="CHEBI:57328"/>
        <dbReference type="ChEBI" id="CHEBI:61723"/>
        <dbReference type="EC" id="2.7.7.3"/>
    </reaction>
</comment>
<comment type="cofactor">
    <cofactor evidence="1">
        <name>Mg(2+)</name>
        <dbReference type="ChEBI" id="CHEBI:18420"/>
    </cofactor>
</comment>
<comment type="pathway">
    <text evidence="1">Cofactor biosynthesis; coenzyme A biosynthesis; CoA from (R)-pantothenate: step 4/5.</text>
</comment>
<comment type="subunit">
    <text evidence="1">Homohexamer.</text>
</comment>
<comment type="subcellular location">
    <subcellularLocation>
        <location evidence="1">Cytoplasm</location>
    </subcellularLocation>
</comment>
<comment type="similarity">
    <text evidence="1">Belongs to the bacterial CoaD family.</text>
</comment>
<organism>
    <name type="scientific">Bacteroides fragilis (strain ATCC 25285 / DSM 2151 / CCUG 4856 / JCM 11019 / LMG 10263 / NCTC 9343 / Onslow / VPI 2553 / EN-2)</name>
    <dbReference type="NCBI Taxonomy" id="272559"/>
    <lineage>
        <taxon>Bacteria</taxon>
        <taxon>Pseudomonadati</taxon>
        <taxon>Bacteroidota</taxon>
        <taxon>Bacteroidia</taxon>
        <taxon>Bacteroidales</taxon>
        <taxon>Bacteroidaceae</taxon>
        <taxon>Bacteroides</taxon>
    </lineage>
</organism>
<accession>Q5L7F1</accession>